<organism>
    <name type="scientific">Oryza sativa subsp. indica</name>
    <name type="common">Rice</name>
    <dbReference type="NCBI Taxonomy" id="39946"/>
    <lineage>
        <taxon>Eukaryota</taxon>
        <taxon>Viridiplantae</taxon>
        <taxon>Streptophyta</taxon>
        <taxon>Embryophyta</taxon>
        <taxon>Tracheophyta</taxon>
        <taxon>Spermatophyta</taxon>
        <taxon>Magnoliopsida</taxon>
        <taxon>Liliopsida</taxon>
        <taxon>Poales</taxon>
        <taxon>Poaceae</taxon>
        <taxon>BOP clade</taxon>
        <taxon>Oryzoideae</taxon>
        <taxon>Oryzeae</taxon>
        <taxon>Oryzinae</taxon>
        <taxon>Oryza</taxon>
        <taxon>Oryza sativa</taxon>
    </lineage>
</organism>
<feature type="chain" id="PRO_0000299275" description="Auxin response factor 17">
    <location>
        <begin position="1"/>
        <end position="917"/>
    </location>
</feature>
<feature type="domain" description="PB1" evidence="3">
    <location>
        <begin position="786"/>
        <end position="870"/>
    </location>
</feature>
<feature type="DNA-binding region" description="TF-B3" evidence="2">
    <location>
        <begin position="134"/>
        <end position="236"/>
    </location>
</feature>
<feature type="region of interest" description="Disordered" evidence="4">
    <location>
        <begin position="571"/>
        <end position="649"/>
    </location>
</feature>
<feature type="compositionally biased region" description="Low complexity" evidence="4">
    <location>
        <begin position="576"/>
        <end position="594"/>
    </location>
</feature>
<feature type="compositionally biased region" description="Low complexity" evidence="4">
    <location>
        <begin position="604"/>
        <end position="620"/>
    </location>
</feature>
<name>ARFQ_ORYSI</name>
<protein>
    <recommendedName>
        <fullName>Auxin response factor 17</fullName>
    </recommendedName>
</protein>
<sequence>MRLSSSSGSVLPAQAASPEAVEEQKCLNSELWHACAGPLVSLPAVGSRVVYFPQGHSEQVAASTNKEMESQIPNYPNLPPQLICQLHNVTMHADAETDEVYAQMTLQPLSPQELKDPYLPAELGSANKQPTNYFCKTLTASDTSTHGGFSVPRRAAEKVFPPLDFTQQPPAQELIAKDLHGNEWKFRHIFRGQPKRHLLTTGWSVFVSAKRLVAGDSVLFIWNDNNQLLLGIRRANRPQTVMPSSVLSSDSMHIGLLAAAAHAASTNSRFTIFYNPRASPSEFVIPLSKYVKAVYHTRISVGMRFRMLFETEESSVRRYMGTITGISDLDAARWPNSHWRSVKVGWDESTAGERQPRVSLWEIEPLTTFPMYPSPFPLRLKRPWPTGLPSLHGGKDDDLTSSLMWLRDSANPGFQSLNFGGLGMNPWMQPRFDASLLGLQPDMYQTIAATAFQDPTKQVSPTILQFQQPQNIGGRANTLLPSQILQQVQPQFQQQQYLQNINETTIQGHAQSEFLQQQLQRCQSFTEQKPQLQTQQQQQESQQQQQQQSQCMQVPQHQQMQQQKNMTNYQSVPNALSPFSQLSSPSQSSPMTLQTVLPFSQPQSYPDTSMSSLSPSNTSTMHNALRPFSSEAPSHLSMPRPTAVPVPDPWSSKRVAVESLLPSRPQVTSQMEQLDSTAPSIPQSSALAPLPGRGCLVDQDGNSDPQNHLLFGVNIDSQSLLMQGGIPSLQGENDSTAIPYSTSNFLSPLQNDFPLDQTLSSADCLDESGYVPCSQNSDQVINRPPATFVKVYKSGTYGRSLDITRFSSYHELRRELGRLFGLEGQLENPLRSGWQLVFVDREDDVLLVGDDPWQEFVNSVSCIKILSPQEVQQMGKPFELLSSAPGKRLGSSCDDYVSRQESRSLSTGIASVGSVEF</sequence>
<reference key="1">
    <citation type="journal article" date="2005" name="PLoS Biol.">
        <title>The genomes of Oryza sativa: a history of duplications.</title>
        <authorList>
            <person name="Yu J."/>
            <person name="Wang J."/>
            <person name="Lin W."/>
            <person name="Li S."/>
            <person name="Li H."/>
            <person name="Zhou J."/>
            <person name="Ni P."/>
            <person name="Dong W."/>
            <person name="Hu S."/>
            <person name="Zeng C."/>
            <person name="Zhang J."/>
            <person name="Zhang Y."/>
            <person name="Li R."/>
            <person name="Xu Z."/>
            <person name="Li S."/>
            <person name="Li X."/>
            <person name="Zheng H."/>
            <person name="Cong L."/>
            <person name="Lin L."/>
            <person name="Yin J."/>
            <person name="Geng J."/>
            <person name="Li G."/>
            <person name="Shi J."/>
            <person name="Liu J."/>
            <person name="Lv H."/>
            <person name="Li J."/>
            <person name="Wang J."/>
            <person name="Deng Y."/>
            <person name="Ran L."/>
            <person name="Shi X."/>
            <person name="Wang X."/>
            <person name="Wu Q."/>
            <person name="Li C."/>
            <person name="Ren X."/>
            <person name="Wang J."/>
            <person name="Wang X."/>
            <person name="Li D."/>
            <person name="Liu D."/>
            <person name="Zhang X."/>
            <person name="Ji Z."/>
            <person name="Zhao W."/>
            <person name="Sun Y."/>
            <person name="Zhang Z."/>
            <person name="Bao J."/>
            <person name="Han Y."/>
            <person name="Dong L."/>
            <person name="Ji J."/>
            <person name="Chen P."/>
            <person name="Wu S."/>
            <person name="Liu J."/>
            <person name="Xiao Y."/>
            <person name="Bu D."/>
            <person name="Tan J."/>
            <person name="Yang L."/>
            <person name="Ye C."/>
            <person name="Zhang J."/>
            <person name="Xu J."/>
            <person name="Zhou Y."/>
            <person name="Yu Y."/>
            <person name="Zhang B."/>
            <person name="Zhuang S."/>
            <person name="Wei H."/>
            <person name="Liu B."/>
            <person name="Lei M."/>
            <person name="Yu H."/>
            <person name="Li Y."/>
            <person name="Xu H."/>
            <person name="Wei S."/>
            <person name="He X."/>
            <person name="Fang L."/>
            <person name="Zhang Z."/>
            <person name="Zhang Y."/>
            <person name="Huang X."/>
            <person name="Su Z."/>
            <person name="Tong W."/>
            <person name="Li J."/>
            <person name="Tong Z."/>
            <person name="Li S."/>
            <person name="Ye J."/>
            <person name="Wang L."/>
            <person name="Fang L."/>
            <person name="Lei T."/>
            <person name="Chen C.-S."/>
            <person name="Chen H.-C."/>
            <person name="Xu Z."/>
            <person name="Li H."/>
            <person name="Huang H."/>
            <person name="Zhang F."/>
            <person name="Xu H."/>
            <person name="Li N."/>
            <person name="Zhao C."/>
            <person name="Li S."/>
            <person name="Dong L."/>
            <person name="Huang Y."/>
            <person name="Li L."/>
            <person name="Xi Y."/>
            <person name="Qi Q."/>
            <person name="Li W."/>
            <person name="Zhang B."/>
            <person name="Hu W."/>
            <person name="Zhang Y."/>
            <person name="Tian X."/>
            <person name="Jiao Y."/>
            <person name="Liang X."/>
            <person name="Jin J."/>
            <person name="Gao L."/>
            <person name="Zheng W."/>
            <person name="Hao B."/>
            <person name="Liu S.-M."/>
            <person name="Wang W."/>
            <person name="Yuan L."/>
            <person name="Cao M."/>
            <person name="McDermott J."/>
            <person name="Samudrala R."/>
            <person name="Wang J."/>
            <person name="Wong G.K.-S."/>
            <person name="Yang H."/>
        </authorList>
    </citation>
    <scope>NUCLEOTIDE SEQUENCE [LARGE SCALE GENOMIC DNA]</scope>
    <source>
        <strain>cv. 93-11</strain>
    </source>
</reference>
<reference key="2">
    <citation type="journal article" date="2007" name="Gene">
        <title>Genome-wide analysis of the auxin response factors (ARF) gene family in rice (Oryza sativa).</title>
        <authorList>
            <person name="Wang D."/>
            <person name="Pei K."/>
            <person name="Fu Y."/>
            <person name="Sun Z."/>
            <person name="Li S."/>
            <person name="Liu H."/>
            <person name="Tang K."/>
            <person name="Han B."/>
            <person name="Tao Y."/>
        </authorList>
    </citation>
    <scope>GENE FAMILY</scope>
    <scope>NOMENCLATURE</scope>
</reference>
<evidence type="ECO:0000250" key="1"/>
<evidence type="ECO:0000255" key="2">
    <source>
        <dbReference type="PROSITE-ProRule" id="PRU00326"/>
    </source>
</evidence>
<evidence type="ECO:0000255" key="3">
    <source>
        <dbReference type="PROSITE-ProRule" id="PRU01081"/>
    </source>
</evidence>
<evidence type="ECO:0000256" key="4">
    <source>
        <dbReference type="SAM" id="MobiDB-lite"/>
    </source>
</evidence>
<evidence type="ECO:0000305" key="5"/>
<proteinExistence type="inferred from homology"/>
<gene>
    <name type="primary">ARF17</name>
    <name type="ORF">OsI_023310</name>
</gene>
<comment type="function">
    <text>Auxin response factors (ARFs) are transcriptional factors that bind specifically to the DNA sequence 5'-TGTCTC-3' found in the auxin-responsive promoter elements (AuxREs).</text>
</comment>
<comment type="subunit">
    <text evidence="1">Homodimers and heterodimers.</text>
</comment>
<comment type="subcellular location">
    <subcellularLocation>
        <location evidence="2">Nucleus</location>
    </subcellularLocation>
</comment>
<comment type="domain">
    <text>Interactions between auxin response factors (ARFs) and Aux/IAA proteins occur through their C-terminal dimerization domains III and IV.</text>
</comment>
<comment type="similarity">
    <text evidence="5">Belongs to the ARF family.</text>
</comment>
<dbReference type="EMBL" id="CM000131">
    <property type="protein sequence ID" value="EAZ02078.1"/>
    <property type="molecule type" value="Genomic_DNA"/>
</dbReference>
<dbReference type="SMR" id="A2YG67"/>
<dbReference type="STRING" id="39946.A2YG67"/>
<dbReference type="EnsemblPlants" id="BGIOSGA020682-TA">
    <property type="protein sequence ID" value="BGIOSGA020682-PA"/>
    <property type="gene ID" value="BGIOSGA020682"/>
</dbReference>
<dbReference type="EnsemblPlants" id="OsIR64_06g0025780.01">
    <property type="protein sequence ID" value="OsIR64_06g0025780.01"/>
    <property type="gene ID" value="OsIR64_06g0025780"/>
</dbReference>
<dbReference type="EnsemblPlants" id="OsLiXu_06g0026590.01">
    <property type="protein sequence ID" value="OsLiXu_06g0026590.01"/>
    <property type="gene ID" value="OsLiXu_06g0026590"/>
</dbReference>
<dbReference type="Gramene" id="BGIOSGA020682-TA">
    <property type="protein sequence ID" value="BGIOSGA020682-PA"/>
    <property type="gene ID" value="BGIOSGA020682"/>
</dbReference>
<dbReference type="Gramene" id="OsIR64_06g0025780.01">
    <property type="protein sequence ID" value="OsIR64_06g0025780.01"/>
    <property type="gene ID" value="OsIR64_06g0025780"/>
</dbReference>
<dbReference type="Gramene" id="OsLiXu_06g0026590.01">
    <property type="protein sequence ID" value="OsLiXu_06g0026590.01"/>
    <property type="gene ID" value="OsLiXu_06g0026590"/>
</dbReference>
<dbReference type="HOGENOM" id="CLU_002626_4_1_1"/>
<dbReference type="OMA" id="SFAETNM"/>
<dbReference type="Proteomes" id="UP000007015">
    <property type="component" value="Chromosome 6"/>
</dbReference>
<dbReference type="GO" id="GO:0005634">
    <property type="term" value="C:nucleus"/>
    <property type="evidence" value="ECO:0007669"/>
    <property type="project" value="UniProtKB-SubCell"/>
</dbReference>
<dbReference type="GO" id="GO:0003677">
    <property type="term" value="F:DNA binding"/>
    <property type="evidence" value="ECO:0007669"/>
    <property type="project" value="UniProtKB-KW"/>
</dbReference>
<dbReference type="GO" id="GO:0009734">
    <property type="term" value="P:auxin-activated signaling pathway"/>
    <property type="evidence" value="ECO:0007669"/>
    <property type="project" value="UniProtKB-KW"/>
</dbReference>
<dbReference type="GO" id="GO:0006355">
    <property type="term" value="P:regulation of DNA-templated transcription"/>
    <property type="evidence" value="ECO:0007669"/>
    <property type="project" value="InterPro"/>
</dbReference>
<dbReference type="CDD" id="cd10017">
    <property type="entry name" value="B3_DNA"/>
    <property type="match status" value="1"/>
</dbReference>
<dbReference type="FunFam" id="2.30.30.1040:FF:000001">
    <property type="entry name" value="Auxin response factor"/>
    <property type="match status" value="1"/>
</dbReference>
<dbReference type="FunFam" id="2.40.330.10:FF:000001">
    <property type="entry name" value="Auxin response factor"/>
    <property type="match status" value="1"/>
</dbReference>
<dbReference type="FunFam" id="3.10.20.90:FF:000047">
    <property type="entry name" value="Auxin response factor"/>
    <property type="match status" value="1"/>
</dbReference>
<dbReference type="Gene3D" id="2.30.30.1040">
    <property type="match status" value="1"/>
</dbReference>
<dbReference type="Gene3D" id="2.40.330.10">
    <property type="entry name" value="DNA-binding pseudobarrel domain"/>
    <property type="match status" value="1"/>
</dbReference>
<dbReference type="Gene3D" id="3.10.20.90">
    <property type="entry name" value="Phosphatidylinositol 3-kinase Catalytic Subunit, Chain A, domain 1"/>
    <property type="match status" value="1"/>
</dbReference>
<dbReference type="InterPro" id="IPR010525">
    <property type="entry name" value="ARF_dom"/>
</dbReference>
<dbReference type="InterPro" id="IPR044835">
    <property type="entry name" value="ARF_plant"/>
</dbReference>
<dbReference type="InterPro" id="IPR033389">
    <property type="entry name" value="AUX/IAA_dom"/>
</dbReference>
<dbReference type="InterPro" id="IPR003340">
    <property type="entry name" value="B3_DNA-bd"/>
</dbReference>
<dbReference type="InterPro" id="IPR015300">
    <property type="entry name" value="DNA-bd_pseudobarrel_sf"/>
</dbReference>
<dbReference type="InterPro" id="IPR053793">
    <property type="entry name" value="PB1-like"/>
</dbReference>
<dbReference type="PANTHER" id="PTHR31384:SF22">
    <property type="entry name" value="AUXIN RESPONSE FACTOR 17"/>
    <property type="match status" value="1"/>
</dbReference>
<dbReference type="PANTHER" id="PTHR31384">
    <property type="entry name" value="AUXIN RESPONSE FACTOR 4-RELATED"/>
    <property type="match status" value="1"/>
</dbReference>
<dbReference type="Pfam" id="PF06507">
    <property type="entry name" value="ARF_AD"/>
    <property type="match status" value="1"/>
</dbReference>
<dbReference type="Pfam" id="PF02309">
    <property type="entry name" value="AUX_IAA"/>
    <property type="match status" value="1"/>
</dbReference>
<dbReference type="Pfam" id="PF02362">
    <property type="entry name" value="B3"/>
    <property type="match status" value="1"/>
</dbReference>
<dbReference type="SMART" id="SM01019">
    <property type="entry name" value="B3"/>
    <property type="match status" value="1"/>
</dbReference>
<dbReference type="SUPFAM" id="SSF54277">
    <property type="entry name" value="CAD &amp; PB1 domains"/>
    <property type="match status" value="1"/>
</dbReference>
<dbReference type="SUPFAM" id="SSF101936">
    <property type="entry name" value="DNA-binding pseudobarrel domain"/>
    <property type="match status" value="1"/>
</dbReference>
<dbReference type="PROSITE" id="PS50863">
    <property type="entry name" value="B3"/>
    <property type="match status" value="1"/>
</dbReference>
<dbReference type="PROSITE" id="PS51745">
    <property type="entry name" value="PB1"/>
    <property type="match status" value="1"/>
</dbReference>
<accession>A2YG67</accession>
<keyword id="KW-0927">Auxin signaling pathway</keyword>
<keyword id="KW-0238">DNA-binding</keyword>
<keyword id="KW-0539">Nucleus</keyword>
<keyword id="KW-1185">Reference proteome</keyword>
<keyword id="KW-0804">Transcription</keyword>
<keyword id="KW-0805">Transcription regulation</keyword>